<proteinExistence type="predicted"/>
<feature type="chain" id="PRO_0000339000" description="Uncharacterized protein ORF4">
    <location>
        <begin position="1"/>
        <end position="136"/>
    </location>
</feature>
<sequence>MVDVEMFGCGGLLVSHLHKFGTERACLRGDGAVFPAVEIGLDQLQVPGRLFDGWNHVLFRSDEDDRFGDRVQHVARDERPQQMRLAGSGGSVDDPDDGLLAHVDGRQLSVLEVATVHLFLGFNFFVGFEKLLINAP</sequence>
<name>YO4_ADEG1</name>
<dbReference type="EMBL" id="U46933">
    <property type="protein sequence ID" value="AAC54903.1"/>
    <property type="molecule type" value="Genomic_DNA"/>
</dbReference>
<dbReference type="RefSeq" id="NP_043877.1">
    <property type="nucleotide sequence ID" value="NC_001720.1"/>
</dbReference>
<dbReference type="KEGG" id="vg:1733476"/>
<dbReference type="Proteomes" id="UP000001594">
    <property type="component" value="Segment"/>
</dbReference>
<protein>
    <recommendedName>
        <fullName>Uncharacterized protein ORF4</fullName>
    </recommendedName>
</protein>
<organism>
    <name type="scientific">Fowl adenovirus A serotype 1 (strain CELO / Phelps)</name>
    <name type="common">FAdV-1</name>
    <name type="synonym">Avian adenovirus gal1 (strain Phelps)</name>
    <dbReference type="NCBI Taxonomy" id="10553"/>
    <lineage>
        <taxon>Viruses</taxon>
        <taxon>Varidnaviria</taxon>
        <taxon>Bamfordvirae</taxon>
        <taxon>Preplasmiviricota</taxon>
        <taxon>Tectiliviricetes</taxon>
        <taxon>Rowavirales</taxon>
        <taxon>Adenoviridae</taxon>
        <taxon>Aviadenovirus</taxon>
        <taxon>Fowl aviadenovirus A</taxon>
    </lineage>
</organism>
<reference key="1">
    <citation type="journal article" date="1996" name="J. Virol.">
        <title>The complete DNA sequence and genomic organization of the avian adenovirus CELO.</title>
        <authorList>
            <person name="Chiocca S."/>
            <person name="Kurzbauer R."/>
            <person name="Schaffner G."/>
            <person name="Baker A."/>
            <person name="Mautner V."/>
            <person name="Cotten M."/>
        </authorList>
    </citation>
    <scope>NUCLEOTIDE SEQUENCE [LARGE SCALE GENOMIC DNA]</scope>
</reference>
<keyword id="KW-1185">Reference proteome</keyword>
<gene>
    <name type="ORF">4</name>
</gene>
<accession>Q64750</accession>
<organismHost>
    <name type="scientific">Galliformes</name>
    <dbReference type="NCBI Taxonomy" id="8976"/>
</organismHost>